<gene>
    <name evidence="1" type="primary">smpB</name>
    <name type="ordered locus">MBIO_0755</name>
</gene>
<protein>
    <recommendedName>
        <fullName evidence="1">SsrA-binding protein</fullName>
    </recommendedName>
    <alternativeName>
        <fullName evidence="1">Small protein B</fullName>
    </alternativeName>
</protein>
<reference key="1">
    <citation type="journal article" date="1999" name="Infect. Immun.">
        <title>Differential posttranslational processing confers intraspecies variation of a major surface lipoprotein and a macrophage-activating lipopeptide of Mycoplasma fermentans.</title>
        <authorList>
            <person name="Calcutt M.J."/>
            <person name="Kim M.F."/>
            <person name="Karpas A.B."/>
            <person name="Muehlradt P.F."/>
            <person name="Wise K.S."/>
        </authorList>
    </citation>
    <scope>NUCLEOTIDE SEQUENCE [GENOMIC DNA]</scope>
    <source>
        <strain>ATCC 19989 / NBRC 14854 / NCTC 10117 / PG18</strain>
    </source>
</reference>
<reference key="2">
    <citation type="journal article" date="2009" name="Curr. Microbiol.">
        <title>Molecular cloning and expression of a novel cholinephosphotransferase involved in glycoglycerophospholipid biosynthesis of Mycoplasma fermentans.</title>
        <authorList>
            <person name="Ishida N."/>
            <person name="Irikura D."/>
            <person name="Matsuda K."/>
            <person name="Sato S."/>
            <person name="Sone T."/>
            <person name="Tanaka M."/>
            <person name="Asano K."/>
        </authorList>
    </citation>
    <scope>NUCLEOTIDE SEQUENCE [LARGE SCALE GENOMIC DNA]</scope>
    <source>
        <strain>ATCC 19989 / NBRC 14854 / NCTC 10117 / PG18</strain>
    </source>
</reference>
<evidence type="ECO:0000255" key="1">
    <source>
        <dbReference type="HAMAP-Rule" id="MF_00023"/>
    </source>
</evidence>
<dbReference type="EMBL" id="AF100324">
    <property type="protein sequence ID" value="AAD25739.1"/>
    <property type="molecule type" value="Genomic_DNA"/>
</dbReference>
<dbReference type="EMBL" id="AP009608">
    <property type="protein sequence ID" value="BAH70020.1"/>
    <property type="molecule type" value="Genomic_DNA"/>
</dbReference>
<dbReference type="RefSeq" id="WP_013527170.1">
    <property type="nucleotide sequence ID" value="NC_021002.1"/>
</dbReference>
<dbReference type="SMR" id="Q9X498"/>
<dbReference type="KEGG" id="mfp:MBIO_0755"/>
<dbReference type="PATRIC" id="fig|496833.3.peg.348"/>
<dbReference type="eggNOG" id="COG0691">
    <property type="taxonomic scope" value="Bacteria"/>
</dbReference>
<dbReference type="HOGENOM" id="CLU_108953_3_1_14"/>
<dbReference type="Proteomes" id="UP000006810">
    <property type="component" value="Chromosome"/>
</dbReference>
<dbReference type="GO" id="GO:0005829">
    <property type="term" value="C:cytosol"/>
    <property type="evidence" value="ECO:0007669"/>
    <property type="project" value="TreeGrafter"/>
</dbReference>
<dbReference type="GO" id="GO:0003723">
    <property type="term" value="F:RNA binding"/>
    <property type="evidence" value="ECO:0007669"/>
    <property type="project" value="UniProtKB-UniRule"/>
</dbReference>
<dbReference type="GO" id="GO:0070929">
    <property type="term" value="P:trans-translation"/>
    <property type="evidence" value="ECO:0007669"/>
    <property type="project" value="UniProtKB-UniRule"/>
</dbReference>
<dbReference type="CDD" id="cd09294">
    <property type="entry name" value="SmpB"/>
    <property type="match status" value="1"/>
</dbReference>
<dbReference type="Gene3D" id="2.40.280.10">
    <property type="match status" value="1"/>
</dbReference>
<dbReference type="HAMAP" id="MF_00023">
    <property type="entry name" value="SmpB"/>
    <property type="match status" value="1"/>
</dbReference>
<dbReference type="InterPro" id="IPR023620">
    <property type="entry name" value="SmpB"/>
</dbReference>
<dbReference type="InterPro" id="IPR000037">
    <property type="entry name" value="SsrA-bd_prot"/>
</dbReference>
<dbReference type="InterPro" id="IPR020081">
    <property type="entry name" value="SsrA-bd_prot_CS"/>
</dbReference>
<dbReference type="NCBIfam" id="NF003843">
    <property type="entry name" value="PRK05422.1"/>
    <property type="match status" value="1"/>
</dbReference>
<dbReference type="NCBIfam" id="TIGR00086">
    <property type="entry name" value="smpB"/>
    <property type="match status" value="1"/>
</dbReference>
<dbReference type="PANTHER" id="PTHR30308:SF2">
    <property type="entry name" value="SSRA-BINDING PROTEIN"/>
    <property type="match status" value="1"/>
</dbReference>
<dbReference type="PANTHER" id="PTHR30308">
    <property type="entry name" value="TMRNA-BINDING COMPONENT OF TRANS-TRANSLATION TAGGING COMPLEX"/>
    <property type="match status" value="1"/>
</dbReference>
<dbReference type="Pfam" id="PF01668">
    <property type="entry name" value="SmpB"/>
    <property type="match status" value="1"/>
</dbReference>
<dbReference type="SUPFAM" id="SSF74982">
    <property type="entry name" value="Small protein B (SmpB)"/>
    <property type="match status" value="1"/>
</dbReference>
<dbReference type="PROSITE" id="PS01317">
    <property type="entry name" value="SSRP"/>
    <property type="match status" value="1"/>
</dbReference>
<feature type="chain" id="PRO_0000102980" description="SsrA-binding protein">
    <location>
        <begin position="1"/>
        <end position="147"/>
    </location>
</feature>
<sequence>MKIISDNKRGMHNYKVIDKYEAGISLMGWEVKSARANTVSLLNSYCFFRKGEIFLCNAQFKQYMLVKCDETRDRKLLMHKNEIVRLQSKLHKLGHATIIPSKIYFDNRSRIKIEIALVQGMKKTDKREEIKKRDNERYIKKVLKNVY</sequence>
<organism>
    <name type="scientific">Mycoplasmopsis fermentans (strain ATCC 19989 / NBRC 14854 / NCTC 10117 / PG18)</name>
    <name type="common">Mycoplasma fermentans</name>
    <dbReference type="NCBI Taxonomy" id="496833"/>
    <lineage>
        <taxon>Bacteria</taxon>
        <taxon>Bacillati</taxon>
        <taxon>Mycoplasmatota</taxon>
        <taxon>Mycoplasmoidales</taxon>
        <taxon>Metamycoplasmataceae</taxon>
        <taxon>Mycoplasmopsis</taxon>
    </lineage>
</organism>
<proteinExistence type="inferred from homology"/>
<accession>Q9X498</accession>
<accession>C4XFU8</accession>
<keyword id="KW-0963">Cytoplasm</keyword>
<keyword id="KW-1185">Reference proteome</keyword>
<keyword id="KW-0694">RNA-binding</keyword>
<name>SSRP_MYCFP</name>
<comment type="function">
    <text evidence="1">Required for rescue of stalled ribosomes mediated by trans-translation. Binds to transfer-messenger RNA (tmRNA), required for stable association of tmRNA with ribosomes. tmRNA and SmpB together mimic tRNA shape, replacing the anticodon stem-loop with SmpB. tmRNA is encoded by the ssrA gene; the 2 termini fold to resemble tRNA(Ala) and it encodes a 'tag peptide', a short internal open reading frame. During trans-translation Ala-aminoacylated tmRNA acts like a tRNA, entering the A-site of stalled ribosomes, displacing the stalled mRNA. The ribosome then switches to translate the ORF on the tmRNA; the nascent peptide is terminated with the 'tag peptide' encoded by the tmRNA and targeted for degradation. The ribosome is freed to recommence translation, which seems to be the essential function of trans-translation.</text>
</comment>
<comment type="subcellular location">
    <subcellularLocation>
        <location evidence="1">Cytoplasm</location>
    </subcellularLocation>
    <text evidence="1">The tmRNA-SmpB complex associates with stalled 70S ribosomes.</text>
</comment>
<comment type="similarity">
    <text evidence="1">Belongs to the SmpB family.</text>
</comment>